<organism>
    <name type="scientific">Equine herpesvirus 1 (strain Kentucky A)</name>
    <name type="common">EHV-1</name>
    <name type="synonym">Equine abortion virus</name>
    <dbReference type="NCBI Taxonomy" id="10329"/>
    <lineage>
        <taxon>Viruses</taxon>
        <taxon>Duplodnaviria</taxon>
        <taxon>Heunggongvirae</taxon>
        <taxon>Peploviricota</taxon>
        <taxon>Herviviricetes</taxon>
        <taxon>Herpesvirales</taxon>
        <taxon>Orthoherpesviridae</taxon>
        <taxon>Alphaherpesvirinae</taxon>
        <taxon>Varicellovirus</taxon>
        <taxon>Varicellovirus equidalpha1</taxon>
        <taxon>Equid alphaherpesvirus 1</taxon>
    </lineage>
</organism>
<evidence type="ECO:0000250" key="1"/>
<evidence type="ECO:0000255" key="2"/>
<evidence type="ECO:0000256" key="3">
    <source>
        <dbReference type="SAM" id="MobiDB-lite"/>
    </source>
</evidence>
<evidence type="ECO:0000305" key="4"/>
<sequence length="236" mass="24990">MDGAYGHVHNGSPMAVDGEESGAGTGTGAGADGLYPTSTDTAAHAVSLPRSVGDFAAVVRAVSAEAADALRSGAGPPAEAWPRVYRMFCDMFGRYAASPMPVFHSADPLRRAVGLYLVDLGAAPVETHAELSGRMLFCAYWCCLGHAFACSRPQMYERACARFFETRLGIGETPPADAERYWAALLNMAGAEPELFPRHAAAAAYLRARGRKLPLQLPSAHRTAKTVAVTGQSINF</sequence>
<proteinExistence type="evidence at transcript level"/>
<name>US10_EHV1K</name>
<keyword id="KW-1048">Host nucleus</keyword>
<keyword id="KW-0426">Late protein</keyword>
<keyword id="KW-0479">Metal-binding</keyword>
<keyword id="KW-0946">Virion</keyword>
<keyword id="KW-0920">Virion tegument</keyword>
<keyword id="KW-0862">Zinc</keyword>
<keyword id="KW-0863">Zinc-finger</keyword>
<reference key="1">
    <citation type="journal article" date="1992" name="Virology">
        <title>Identification and characterization of an equine herpesvirus 1 late gene encoding a potential zinc finger.</title>
        <authorList>
            <person name="Holden V.R."/>
            <person name="Yalamanchili R.R."/>
            <person name="Harty R.N."/>
            <person name="O'Callaghan D.J."/>
        </authorList>
    </citation>
    <scope>NUCLEOTIDE SEQUENCE [GENOMIC DNA]</scope>
</reference>
<protein>
    <recommendedName>
        <fullName>Virion protein US10 homolog</fullName>
    </recommendedName>
    <alternativeName>
        <fullName>Gene 66 protein</fullName>
    </alternativeName>
    <alternativeName>
        <fullName>IR5 protein</fullName>
    </alternativeName>
    <alternativeName>
        <fullName>ORF S2-1</fullName>
    </alternativeName>
</protein>
<accession>P29123</accession>
<dbReference type="EMBL" id="M84521">
    <property type="protein sequence ID" value="AAA46093.1"/>
    <property type="molecule type" value="Genomic_DNA"/>
</dbReference>
<dbReference type="EMBL" id="M25345">
    <property type="protein sequence ID" value="AAA46097.1"/>
    <property type="molecule type" value="Genomic_DNA"/>
</dbReference>
<dbReference type="PIR" id="A42541">
    <property type="entry name" value="WZBEK1"/>
</dbReference>
<dbReference type="GO" id="GO:0044204">
    <property type="term" value="C:host cell nuclear matrix"/>
    <property type="evidence" value="ECO:0007669"/>
    <property type="project" value="UniProtKB-SubCell"/>
</dbReference>
<dbReference type="GO" id="GO:0019033">
    <property type="term" value="C:viral tegument"/>
    <property type="evidence" value="ECO:0007669"/>
    <property type="project" value="UniProtKB-SubCell"/>
</dbReference>
<dbReference type="GO" id="GO:0008270">
    <property type="term" value="F:zinc ion binding"/>
    <property type="evidence" value="ECO:0007669"/>
    <property type="project" value="UniProtKB-KW"/>
</dbReference>
<dbReference type="InterPro" id="IPR000714">
    <property type="entry name" value="EHV_Unk"/>
</dbReference>
<dbReference type="Pfam" id="PF02053">
    <property type="entry name" value="Gene66"/>
    <property type="match status" value="1"/>
</dbReference>
<dbReference type="PRINTS" id="PR00957">
    <property type="entry name" value="GENE66"/>
</dbReference>
<organismHost>
    <name type="scientific">Equus caballus</name>
    <name type="common">Horse</name>
    <dbReference type="NCBI Taxonomy" id="9796"/>
</organismHost>
<feature type="chain" id="PRO_0000116149" description="Virion protein US10 homolog">
    <location>
        <begin position="1"/>
        <end position="236"/>
    </location>
</feature>
<feature type="zinc finger region" evidence="2">
    <location>
        <begin position="138"/>
        <end position="150"/>
    </location>
</feature>
<feature type="region of interest" description="Disordered" evidence="3">
    <location>
        <begin position="1"/>
        <end position="32"/>
    </location>
</feature>
<feature type="compositionally biased region" description="Gly residues" evidence="3">
    <location>
        <begin position="21"/>
        <end position="31"/>
    </location>
</feature>
<comment type="subcellular location">
    <subcellularLocation>
        <location evidence="1">Virion tegument</location>
    </subcellularLocation>
    <subcellularLocation>
        <location evidence="1">Host nucleus matrix</location>
    </subcellularLocation>
</comment>
<comment type="induction">
    <text>Expressed late in the infection cycle.</text>
</comment>
<comment type="PTM">
    <text evidence="1">Phosphorylated.</text>
</comment>
<comment type="similarity">
    <text evidence="4">Belongs to the herpesviridae US10 family.</text>
</comment>
<gene>
    <name type="primary">IR5</name>
</gene>